<name>YHES_ECOL6</name>
<dbReference type="EMBL" id="AE014075">
    <property type="protein sequence ID" value="AAN82565.1"/>
    <property type="molecule type" value="Genomic_DNA"/>
</dbReference>
<dbReference type="RefSeq" id="WP_000634808.1">
    <property type="nucleotide sequence ID" value="NZ_CP051263.1"/>
</dbReference>
<dbReference type="SMR" id="A0A0H2VBH0"/>
<dbReference type="STRING" id="199310.c4127"/>
<dbReference type="KEGG" id="ecc:c4127"/>
<dbReference type="eggNOG" id="COG0488">
    <property type="taxonomic scope" value="Bacteria"/>
</dbReference>
<dbReference type="HOGENOM" id="CLU_000604_36_0_6"/>
<dbReference type="Proteomes" id="UP000001410">
    <property type="component" value="Chromosome"/>
</dbReference>
<dbReference type="GO" id="GO:0005524">
    <property type="term" value="F:ATP binding"/>
    <property type="evidence" value="ECO:0007669"/>
    <property type="project" value="UniProtKB-KW"/>
</dbReference>
<dbReference type="GO" id="GO:0016887">
    <property type="term" value="F:ATP hydrolysis activity"/>
    <property type="evidence" value="ECO:0007669"/>
    <property type="project" value="InterPro"/>
</dbReference>
<dbReference type="CDD" id="cd03221">
    <property type="entry name" value="ABCF_EF-3"/>
    <property type="match status" value="2"/>
</dbReference>
<dbReference type="FunFam" id="3.40.50.300:FF:002053">
    <property type="entry name" value="ABC transporter ATP-binding protein"/>
    <property type="match status" value="1"/>
</dbReference>
<dbReference type="FunFam" id="3.40.50.300:FF:000011">
    <property type="entry name" value="Putative ABC transporter ATP-binding component"/>
    <property type="match status" value="1"/>
</dbReference>
<dbReference type="Gene3D" id="3.40.50.300">
    <property type="entry name" value="P-loop containing nucleotide triphosphate hydrolases"/>
    <property type="match status" value="2"/>
</dbReference>
<dbReference type="InterPro" id="IPR003593">
    <property type="entry name" value="AAA+_ATPase"/>
</dbReference>
<dbReference type="InterPro" id="IPR032781">
    <property type="entry name" value="ABC_tran_Xtn"/>
</dbReference>
<dbReference type="InterPro" id="IPR003439">
    <property type="entry name" value="ABC_transporter-like_ATP-bd"/>
</dbReference>
<dbReference type="InterPro" id="IPR017871">
    <property type="entry name" value="ABC_transporter-like_CS"/>
</dbReference>
<dbReference type="InterPro" id="IPR050611">
    <property type="entry name" value="ABCF_EF3_subfamily"/>
</dbReference>
<dbReference type="InterPro" id="IPR027417">
    <property type="entry name" value="P-loop_NTPase"/>
</dbReference>
<dbReference type="NCBIfam" id="NF007921">
    <property type="entry name" value="PRK10636.1"/>
    <property type="match status" value="1"/>
</dbReference>
<dbReference type="PANTHER" id="PTHR19211:SF14">
    <property type="entry name" value="ATP-BINDING CASSETTE SUB-FAMILY F MEMBER 1"/>
    <property type="match status" value="1"/>
</dbReference>
<dbReference type="PANTHER" id="PTHR19211">
    <property type="entry name" value="ATP-BINDING TRANSPORT PROTEIN-RELATED"/>
    <property type="match status" value="1"/>
</dbReference>
<dbReference type="Pfam" id="PF00005">
    <property type="entry name" value="ABC_tran"/>
    <property type="match status" value="2"/>
</dbReference>
<dbReference type="Pfam" id="PF12848">
    <property type="entry name" value="ABC_tran_Xtn"/>
    <property type="match status" value="1"/>
</dbReference>
<dbReference type="SMART" id="SM00382">
    <property type="entry name" value="AAA"/>
    <property type="match status" value="2"/>
</dbReference>
<dbReference type="SUPFAM" id="SSF52540">
    <property type="entry name" value="P-loop containing nucleoside triphosphate hydrolases"/>
    <property type="match status" value="2"/>
</dbReference>
<dbReference type="PROSITE" id="PS00211">
    <property type="entry name" value="ABC_TRANSPORTER_1"/>
    <property type="match status" value="2"/>
</dbReference>
<dbReference type="PROSITE" id="PS50893">
    <property type="entry name" value="ABC_TRANSPORTER_2"/>
    <property type="match status" value="2"/>
</dbReference>
<keyword id="KW-0067">ATP-binding</keyword>
<keyword id="KW-0547">Nucleotide-binding</keyword>
<keyword id="KW-1185">Reference proteome</keyword>
<keyword id="KW-0677">Repeat</keyword>
<organism>
    <name type="scientific">Escherichia coli O6:H1 (strain CFT073 / ATCC 700928 / UPEC)</name>
    <dbReference type="NCBI Taxonomy" id="199310"/>
    <lineage>
        <taxon>Bacteria</taxon>
        <taxon>Pseudomonadati</taxon>
        <taxon>Pseudomonadota</taxon>
        <taxon>Gammaproteobacteria</taxon>
        <taxon>Enterobacterales</taxon>
        <taxon>Enterobacteriaceae</taxon>
        <taxon>Escherichia</taxon>
    </lineage>
</organism>
<evidence type="ECO:0000255" key="1">
    <source>
        <dbReference type="PROSITE-ProRule" id="PRU00434"/>
    </source>
</evidence>
<evidence type="ECO:0000256" key="2">
    <source>
        <dbReference type="SAM" id="MobiDB-lite"/>
    </source>
</evidence>
<evidence type="ECO:0000269" key="3">
    <source>
    </source>
</evidence>
<evidence type="ECO:0000303" key="4">
    <source>
    </source>
</evidence>
<evidence type="ECO:0000305" key="5">
    <source>
    </source>
</evidence>
<sequence length="637" mass="71870">MIVFSSLQIRRGVRVLLDNATATINPGQKVGLVGKNGCGKSTLLALLKNEISADGGSYTFPGSWQLAWVNQETPALPQAALEYVIDGDREYRQLEAQLHDANERNDGHAIATIHGKLDAIDAWSIRSRAASLLHGLGFSNEQLERPVSDFSGGWRMRLNLAQALICRSDLLLLDEPTNHLDLDAVIWLEKWLKSYQGTLILISHDRDFLDPIVDKIIHIEQQSMFEYTGNYSSFEVQRATRLAQQQAMYESQQERVAHLQSYIDRFRAKATKAKQAQSRIKMLERMELIAPAHVDNPFRFSFRAPESLPNPLLKMEKVSAGYGDRIILDSIKLNLVPGSRIGLLGRNGAGKSTLIKLLAGELAPVSGEIGLAKGIKLGYFAQHQLEYLRADESPLQHLARLAPQELEQKLRDYLGGFGFQGDKVTEETRRFSGGEKARLVLALIVWQRPNLLLLDEPTNHLDLDMRQALTEALIEFEGALVVVSHDRHLLRSTTDDLYLVHDRKVEPFDGDLEDYQQWLSDVQKQENQTDEAPKENANSAQARKDQKRREAELRAQTQPLRKEIARLEKEMEKLNAQLAQAEEKLGDSELYDQNRKAELTACLQQQASAKSGLEECEMAWLEAQEQLEQMLLEGQSN</sequence>
<protein>
    <recommendedName>
        <fullName>Probable ATP-binding protein YheS</fullName>
    </recommendedName>
</protein>
<accession>A0A0H2VBH0</accession>
<reference key="1">
    <citation type="journal article" date="2002" name="Proc. Natl. Acad. Sci. U.S.A.">
        <title>Extensive mosaic structure revealed by the complete genome sequence of uropathogenic Escherichia coli.</title>
        <authorList>
            <person name="Welch R.A."/>
            <person name="Burland V."/>
            <person name="Plunkett G. III"/>
            <person name="Redford P."/>
            <person name="Roesch P."/>
            <person name="Rasko D."/>
            <person name="Buckles E.L."/>
            <person name="Liou S.-R."/>
            <person name="Boutin A."/>
            <person name="Hackett J."/>
            <person name="Stroud D."/>
            <person name="Mayhew G.F."/>
            <person name="Rose D.J."/>
            <person name="Zhou S."/>
            <person name="Schwartz D.C."/>
            <person name="Perna N.T."/>
            <person name="Mobley H.L.T."/>
            <person name="Donnenberg M.S."/>
            <person name="Blattner F.R."/>
        </authorList>
    </citation>
    <scope>NUCLEOTIDE SEQUENCE [LARGE SCALE GENOMIC DNA]</scope>
    <source>
        <strain>CFT073 / ATCC 700928 / UPEC</strain>
    </source>
</reference>
<reference key="2">
    <citation type="journal article" date="2019" name="J. Mol. Biol.">
        <title>ABCF ATPases involved in protein synthesis, ribosome assembly and antibiotic resistance: structural and functional diversification across the tree of life.</title>
        <authorList>
            <person name="Murina V."/>
            <person name="Kasari M."/>
            <person name="Takada H."/>
            <person name="Hinnu M."/>
            <person name="Saha C.K."/>
            <person name="Grimshaw J.W."/>
            <person name="Seki T."/>
            <person name="Reith M."/>
            <person name="Putrins M."/>
            <person name="Tenson T."/>
            <person name="Strahl H."/>
            <person name="Hauryliuk V."/>
            <person name="Atkinson G.C."/>
        </authorList>
    </citation>
    <scope>DISRUPTION PHENOTYPE</scope>
    <scope>MUTAGENESIS OF GLU-175 AND GLU-456</scope>
    <source>
        <strain>CFT073 / ATCC 700928 / UPEC</strain>
    </source>
</reference>
<proteinExistence type="evidence at protein level"/>
<comment type="function">
    <text evidence="3 5">Genetic data indicate it may be involved in ribosome assembly or function (Probable). Ectopic expression exacerbates the cold-sensitive growth phenotype of a bipA deletion (PubMed:30597160).</text>
</comment>
<comment type="disruption phenotype">
    <text evidence="3">No visible growth or ribosome-associated phenotype.</text>
</comment>
<comment type="similarity">
    <text evidence="4">Belongs to the ABC transporter superfamily. ABCF family. YheS subfamily.</text>
</comment>
<gene>
    <name type="primary">yheS</name>
    <name type="ordered locus">c4127</name>
</gene>
<feature type="chain" id="PRO_0000449036" description="Probable ATP-binding protein YheS">
    <location>
        <begin position="1"/>
        <end position="637"/>
    </location>
</feature>
<feature type="domain" description="ABC transporter 1" evidence="1">
    <location>
        <begin position="2"/>
        <end position="246"/>
    </location>
</feature>
<feature type="domain" description="ABC transporter 2" evidence="1">
    <location>
        <begin position="313"/>
        <end position="527"/>
    </location>
</feature>
<feature type="region of interest" description="Disordered" evidence="2">
    <location>
        <begin position="523"/>
        <end position="559"/>
    </location>
</feature>
<feature type="compositionally biased region" description="Basic and acidic residues" evidence="2">
    <location>
        <begin position="542"/>
        <end position="553"/>
    </location>
</feature>
<feature type="binding site" evidence="1">
    <location>
        <begin position="34"/>
        <end position="41"/>
    </location>
    <ligand>
        <name>ATP</name>
        <dbReference type="ChEBI" id="CHEBI:30616"/>
    </ligand>
</feature>
<feature type="binding site" evidence="1">
    <location>
        <begin position="345"/>
        <end position="352"/>
    </location>
    <ligand>
        <name>ATP</name>
        <dbReference type="ChEBI" id="CHEBI:30616"/>
    </ligand>
</feature>
<feature type="mutagenesis site" description="Causes growth defect at 18 degrees Celsius in bipA deletion strain; when associated with Q-456 (called EQ2)." evidence="3">
    <original>E</original>
    <variation>Q</variation>
    <location>
        <position position="175"/>
    </location>
</feature>
<feature type="mutagenesis site" description="Causes growth defect at 18 degrees Celsius in bipA deletion strain; when associated with Q-175 (EQ2)." evidence="3">
    <original>E</original>
    <variation>Q</variation>
    <location>
        <position position="456"/>
    </location>
</feature>